<evidence type="ECO:0000255" key="1">
    <source>
        <dbReference type="HAMAP-Rule" id="MF_00503"/>
    </source>
</evidence>
<evidence type="ECO:0000305" key="2"/>
<proteinExistence type="inferred from homology"/>
<name>RL9_SODGM</name>
<feature type="chain" id="PRO_0000236589" description="Large ribosomal subunit protein bL9">
    <location>
        <begin position="1"/>
        <end position="150"/>
    </location>
</feature>
<protein>
    <recommendedName>
        <fullName evidence="1">Large ribosomal subunit protein bL9</fullName>
    </recommendedName>
    <alternativeName>
        <fullName evidence="2">50S ribosomal protein L9</fullName>
    </alternativeName>
</protein>
<dbReference type="EMBL" id="AP008232">
    <property type="protein sequence ID" value="BAE73623.1"/>
    <property type="molecule type" value="Genomic_DNA"/>
</dbReference>
<dbReference type="RefSeq" id="WP_011410211.1">
    <property type="nucleotide sequence ID" value="NC_007712.1"/>
</dbReference>
<dbReference type="SMR" id="Q2NW52"/>
<dbReference type="STRING" id="343509.SG0348"/>
<dbReference type="KEGG" id="sgl:SG0348"/>
<dbReference type="eggNOG" id="COG0359">
    <property type="taxonomic scope" value="Bacteria"/>
</dbReference>
<dbReference type="HOGENOM" id="CLU_078938_4_1_6"/>
<dbReference type="OrthoDB" id="9788336at2"/>
<dbReference type="BioCyc" id="SGLO343509:SGP1_RS03350-MONOMER"/>
<dbReference type="Proteomes" id="UP000001932">
    <property type="component" value="Chromosome"/>
</dbReference>
<dbReference type="GO" id="GO:1990904">
    <property type="term" value="C:ribonucleoprotein complex"/>
    <property type="evidence" value="ECO:0007669"/>
    <property type="project" value="UniProtKB-KW"/>
</dbReference>
<dbReference type="GO" id="GO:0005840">
    <property type="term" value="C:ribosome"/>
    <property type="evidence" value="ECO:0007669"/>
    <property type="project" value="UniProtKB-KW"/>
</dbReference>
<dbReference type="GO" id="GO:0019843">
    <property type="term" value="F:rRNA binding"/>
    <property type="evidence" value="ECO:0007669"/>
    <property type="project" value="UniProtKB-UniRule"/>
</dbReference>
<dbReference type="GO" id="GO:0003735">
    <property type="term" value="F:structural constituent of ribosome"/>
    <property type="evidence" value="ECO:0007669"/>
    <property type="project" value="InterPro"/>
</dbReference>
<dbReference type="GO" id="GO:0006412">
    <property type="term" value="P:translation"/>
    <property type="evidence" value="ECO:0007669"/>
    <property type="project" value="UniProtKB-UniRule"/>
</dbReference>
<dbReference type="FunFam" id="3.10.430.100:FF:000001">
    <property type="entry name" value="50S ribosomal protein L9"/>
    <property type="match status" value="1"/>
</dbReference>
<dbReference type="FunFam" id="3.40.5.10:FF:000001">
    <property type="entry name" value="50S ribosomal protein L9"/>
    <property type="match status" value="1"/>
</dbReference>
<dbReference type="Gene3D" id="3.10.430.100">
    <property type="entry name" value="Ribosomal protein L9, C-terminal domain"/>
    <property type="match status" value="1"/>
</dbReference>
<dbReference type="Gene3D" id="3.40.5.10">
    <property type="entry name" value="Ribosomal protein L9, N-terminal domain"/>
    <property type="match status" value="1"/>
</dbReference>
<dbReference type="HAMAP" id="MF_00503">
    <property type="entry name" value="Ribosomal_bL9"/>
    <property type="match status" value="1"/>
</dbReference>
<dbReference type="InterPro" id="IPR000244">
    <property type="entry name" value="Ribosomal_bL9"/>
</dbReference>
<dbReference type="InterPro" id="IPR009027">
    <property type="entry name" value="Ribosomal_bL9/RNase_H1_N"/>
</dbReference>
<dbReference type="InterPro" id="IPR020594">
    <property type="entry name" value="Ribosomal_bL9_bac/chp"/>
</dbReference>
<dbReference type="InterPro" id="IPR020069">
    <property type="entry name" value="Ribosomal_bL9_C"/>
</dbReference>
<dbReference type="InterPro" id="IPR036791">
    <property type="entry name" value="Ribosomal_bL9_C_sf"/>
</dbReference>
<dbReference type="InterPro" id="IPR020070">
    <property type="entry name" value="Ribosomal_bL9_N"/>
</dbReference>
<dbReference type="InterPro" id="IPR036935">
    <property type="entry name" value="Ribosomal_bL9_N_sf"/>
</dbReference>
<dbReference type="NCBIfam" id="TIGR00158">
    <property type="entry name" value="L9"/>
    <property type="match status" value="1"/>
</dbReference>
<dbReference type="PANTHER" id="PTHR21368">
    <property type="entry name" value="50S RIBOSOMAL PROTEIN L9"/>
    <property type="match status" value="1"/>
</dbReference>
<dbReference type="Pfam" id="PF03948">
    <property type="entry name" value="Ribosomal_L9_C"/>
    <property type="match status" value="1"/>
</dbReference>
<dbReference type="Pfam" id="PF01281">
    <property type="entry name" value="Ribosomal_L9_N"/>
    <property type="match status" value="1"/>
</dbReference>
<dbReference type="SUPFAM" id="SSF55658">
    <property type="entry name" value="L9 N-domain-like"/>
    <property type="match status" value="1"/>
</dbReference>
<dbReference type="SUPFAM" id="SSF55653">
    <property type="entry name" value="Ribosomal protein L9 C-domain"/>
    <property type="match status" value="1"/>
</dbReference>
<dbReference type="PROSITE" id="PS00651">
    <property type="entry name" value="RIBOSOMAL_L9"/>
    <property type="match status" value="1"/>
</dbReference>
<accession>Q2NW52</accession>
<reference key="1">
    <citation type="journal article" date="2006" name="Genome Res.">
        <title>Massive genome erosion and functional adaptations provide insights into the symbiotic lifestyle of Sodalis glossinidius in the tsetse host.</title>
        <authorList>
            <person name="Toh H."/>
            <person name="Weiss B.L."/>
            <person name="Perkin S.A.H."/>
            <person name="Yamashita A."/>
            <person name="Oshima K."/>
            <person name="Hattori M."/>
            <person name="Aksoy S."/>
        </authorList>
    </citation>
    <scope>NUCLEOTIDE SEQUENCE [LARGE SCALE GENOMIC DNA]</scope>
    <source>
        <strain>morsitans</strain>
    </source>
</reference>
<keyword id="KW-0687">Ribonucleoprotein</keyword>
<keyword id="KW-0689">Ribosomal protein</keyword>
<keyword id="KW-0694">RNA-binding</keyword>
<keyword id="KW-0699">rRNA-binding</keyword>
<sequence length="150" mass="15864">MQVILLDKVANLGGLGEQVNVKAGYARNYLVPQGKAVPATKKNVEYFEERRAELEAKLAETQAAAEARAAKINELGIVTIPSKAGDEGKLFGSIGTRDIADAITAAGINVSKSEVRLPNGVLRTTGDHDVSIQVHSEVFASLNVVIVPEA</sequence>
<comment type="function">
    <text evidence="1">Binds to the 23S rRNA.</text>
</comment>
<comment type="similarity">
    <text evidence="1">Belongs to the bacterial ribosomal protein bL9 family.</text>
</comment>
<organism>
    <name type="scientific">Sodalis glossinidius (strain morsitans)</name>
    <dbReference type="NCBI Taxonomy" id="343509"/>
    <lineage>
        <taxon>Bacteria</taxon>
        <taxon>Pseudomonadati</taxon>
        <taxon>Pseudomonadota</taxon>
        <taxon>Gammaproteobacteria</taxon>
        <taxon>Enterobacterales</taxon>
        <taxon>Bruguierivoracaceae</taxon>
        <taxon>Sodalis</taxon>
    </lineage>
</organism>
<gene>
    <name evidence="1" type="primary">rplI</name>
    <name type="ordered locus">SG0348</name>
</gene>